<comment type="subcellular location">
    <subcellularLocation>
        <location evidence="1">Cell inner membrane</location>
        <topology evidence="1">Multi-pass membrane protein</topology>
    </subcellularLocation>
</comment>
<comment type="similarity">
    <text evidence="3">To H.influenzae HI_0842.</text>
</comment>
<sequence>MVTHRQRYREKVSQMVSWGHWFALFNILLATLLGSRYLFVADWPTTLAGRIYSYLSIVGHFSFLVFATYLLILFPLTFIVMSQRLMRFLSAILATAGMTLLLIDSEVFTRFHLHLNPIVWELVINPDQNEMARDWQLMFISVPVILLIEMLFATWSWQKLRSLTRRRHFARPLAAFFFVSFIASHLIYIWADANFYRPITMQRANLPLSYPMTARRFLEKHGLLDAQEYQRRLVEQGNPEAVSVQYPLSNLHYRDMGTGQNVLLITVDGLNYSRFEKQMPELATFAEQNIDFTRHMSSGNTTDNGIFGLFYGISPGYMDGVLSTRTPAALITALNQQGYQLGLFSSDGFASPLYRQALLSDFSMPAAQTQSDAQTASQWIDWLGRYAQEDNRWFSWISFSGTNIDDSNQKNFVKRYASAASDVDAQINRVLNALREAGKFDNTVVIITAGRGIPLTPEENRFDWSQGHLQVPLVIHWPGTPAQRINVLTDHTDVMTTLMQRLLHVSTPANEYSQGQDIFTVPRRHNWVTAADGSTLAITTPQMTLVLNNNGHYQTYDLHGEKIKDQKPQLSLLLQVLTEEKRFIAN</sequence>
<gene>
    <name type="primary">yejM</name>
    <name type="ordered locus">STY2466</name>
    <name type="ordered locus">t0626</name>
</gene>
<protein>
    <recommendedName>
        <fullName>Inner membrane protein YejM</fullName>
    </recommendedName>
</protein>
<feature type="chain" id="PRO_0000169168" description="Inner membrane protein YejM">
    <location>
        <begin position="1"/>
        <end position="586"/>
    </location>
</feature>
<feature type="topological domain" description="Cytoplasmic" evidence="2">
    <location>
        <begin position="1"/>
        <end position="20"/>
    </location>
</feature>
<feature type="transmembrane region" description="Helical" evidence="2">
    <location>
        <begin position="21"/>
        <end position="43"/>
    </location>
</feature>
<feature type="topological domain" description="Periplasmic" evidence="2">
    <location>
        <begin position="44"/>
        <end position="57"/>
    </location>
</feature>
<feature type="transmembrane region" description="Helical" evidence="2">
    <location>
        <begin position="58"/>
        <end position="80"/>
    </location>
</feature>
<feature type="topological domain" description="Cytoplasmic" evidence="2">
    <location>
        <begin position="81"/>
        <end position="84"/>
    </location>
</feature>
<feature type="transmembrane region" description="Helical" evidence="2">
    <location>
        <begin position="85"/>
        <end position="103"/>
    </location>
</feature>
<feature type="topological domain" description="Periplasmic" evidence="2">
    <location>
        <begin position="104"/>
        <end position="134"/>
    </location>
</feature>
<feature type="transmembrane region" description="Helical" evidence="2">
    <location>
        <begin position="135"/>
        <end position="157"/>
    </location>
</feature>
<feature type="topological domain" description="Cytoplasmic" evidence="2">
    <location>
        <begin position="158"/>
        <end position="168"/>
    </location>
</feature>
<feature type="transmembrane region" description="Helical" evidence="2">
    <location>
        <begin position="169"/>
        <end position="191"/>
    </location>
</feature>
<feature type="topological domain" description="Periplasmic" evidence="2">
    <location>
        <begin position="192"/>
        <end position="586"/>
    </location>
</feature>
<feature type="sequence conflict" description="In Ref. 2; AAO68327." evidence="3" ref="2">
    <original>S</original>
    <variation>N</variation>
    <location>
        <position position="400"/>
    </location>
</feature>
<keyword id="KW-0997">Cell inner membrane</keyword>
<keyword id="KW-1003">Cell membrane</keyword>
<keyword id="KW-0472">Membrane</keyword>
<keyword id="KW-0812">Transmembrane</keyword>
<keyword id="KW-1133">Transmembrane helix</keyword>
<name>YEJM_SALTI</name>
<reference key="1">
    <citation type="journal article" date="2001" name="Nature">
        <title>Complete genome sequence of a multiple drug resistant Salmonella enterica serovar Typhi CT18.</title>
        <authorList>
            <person name="Parkhill J."/>
            <person name="Dougan G."/>
            <person name="James K.D."/>
            <person name="Thomson N.R."/>
            <person name="Pickard D."/>
            <person name="Wain J."/>
            <person name="Churcher C.M."/>
            <person name="Mungall K.L."/>
            <person name="Bentley S.D."/>
            <person name="Holden M.T.G."/>
            <person name="Sebaihia M."/>
            <person name="Baker S."/>
            <person name="Basham D."/>
            <person name="Brooks K."/>
            <person name="Chillingworth T."/>
            <person name="Connerton P."/>
            <person name="Cronin A."/>
            <person name="Davis P."/>
            <person name="Davies R.M."/>
            <person name="Dowd L."/>
            <person name="White N."/>
            <person name="Farrar J."/>
            <person name="Feltwell T."/>
            <person name="Hamlin N."/>
            <person name="Haque A."/>
            <person name="Hien T.T."/>
            <person name="Holroyd S."/>
            <person name="Jagels K."/>
            <person name="Krogh A."/>
            <person name="Larsen T.S."/>
            <person name="Leather S."/>
            <person name="Moule S."/>
            <person name="O'Gaora P."/>
            <person name="Parry C."/>
            <person name="Quail M.A."/>
            <person name="Rutherford K.M."/>
            <person name="Simmonds M."/>
            <person name="Skelton J."/>
            <person name="Stevens K."/>
            <person name="Whitehead S."/>
            <person name="Barrell B.G."/>
        </authorList>
    </citation>
    <scope>NUCLEOTIDE SEQUENCE [LARGE SCALE GENOMIC DNA]</scope>
    <source>
        <strain>CT18</strain>
    </source>
</reference>
<reference key="2">
    <citation type="journal article" date="2003" name="J. Bacteriol.">
        <title>Comparative genomics of Salmonella enterica serovar Typhi strains Ty2 and CT18.</title>
        <authorList>
            <person name="Deng W."/>
            <person name="Liou S.-R."/>
            <person name="Plunkett G. III"/>
            <person name="Mayhew G.F."/>
            <person name="Rose D.J."/>
            <person name="Burland V."/>
            <person name="Kodoyianni V."/>
            <person name="Schwartz D.C."/>
            <person name="Blattner F.R."/>
        </authorList>
    </citation>
    <scope>NUCLEOTIDE SEQUENCE [LARGE SCALE GENOMIC DNA]</scope>
    <source>
        <strain>ATCC 700931 / Ty2</strain>
    </source>
</reference>
<accession>Q8Z579</accession>
<dbReference type="EMBL" id="AL513382">
    <property type="protein sequence ID" value="CAD02611.1"/>
    <property type="molecule type" value="Genomic_DNA"/>
</dbReference>
<dbReference type="EMBL" id="AE014613">
    <property type="protein sequence ID" value="AAO68327.1"/>
    <property type="molecule type" value="Genomic_DNA"/>
</dbReference>
<dbReference type="RefSeq" id="NP_456786.1">
    <property type="nucleotide sequence ID" value="NC_003198.1"/>
</dbReference>
<dbReference type="SMR" id="Q8Z579"/>
<dbReference type="STRING" id="220341.gene:17586366"/>
<dbReference type="KEGG" id="stt:t0626"/>
<dbReference type="KEGG" id="sty:STY2466"/>
<dbReference type="PATRIC" id="fig|220341.7.peg.2493"/>
<dbReference type="eggNOG" id="COG3083">
    <property type="taxonomic scope" value="Bacteria"/>
</dbReference>
<dbReference type="HOGENOM" id="CLU_030247_1_0_6"/>
<dbReference type="OMA" id="QMLFSRW"/>
<dbReference type="Proteomes" id="UP000000541">
    <property type="component" value="Chromosome"/>
</dbReference>
<dbReference type="Proteomes" id="UP000002670">
    <property type="component" value="Chromosome"/>
</dbReference>
<dbReference type="GO" id="GO:0005886">
    <property type="term" value="C:plasma membrane"/>
    <property type="evidence" value="ECO:0007669"/>
    <property type="project" value="UniProtKB-SubCell"/>
</dbReference>
<dbReference type="FunFam" id="3.40.720.10:FF:000014">
    <property type="entry name" value="Hydrolase, inner membrane"/>
    <property type="match status" value="1"/>
</dbReference>
<dbReference type="Gene3D" id="3.40.720.10">
    <property type="entry name" value="Alkaline Phosphatase, subunit A"/>
    <property type="match status" value="1"/>
</dbReference>
<dbReference type="InterPro" id="IPR017850">
    <property type="entry name" value="Alkaline_phosphatase_core_sf"/>
</dbReference>
<dbReference type="InterPro" id="IPR000917">
    <property type="entry name" value="Sulfatase_N"/>
</dbReference>
<dbReference type="InterPro" id="IPR012159">
    <property type="entry name" value="YejM-like"/>
</dbReference>
<dbReference type="InterPro" id="IPR047997">
    <property type="entry name" value="YejM_enterobact"/>
</dbReference>
<dbReference type="InterPro" id="IPR024588">
    <property type="entry name" value="YejM_N"/>
</dbReference>
<dbReference type="NCBIfam" id="NF038282">
    <property type="entry name" value="LapC_YejM_PbgA"/>
    <property type="match status" value="1"/>
</dbReference>
<dbReference type="PANTHER" id="PTHR43108:SF10">
    <property type="entry name" value="INNER MEMBRANE PROTEIN YEJM"/>
    <property type="match status" value="1"/>
</dbReference>
<dbReference type="PANTHER" id="PTHR43108">
    <property type="entry name" value="N-ACETYLGLUCOSAMINE-6-SULFATASE FAMILY MEMBER"/>
    <property type="match status" value="1"/>
</dbReference>
<dbReference type="Pfam" id="PF11893">
    <property type="entry name" value="DUF3413"/>
    <property type="match status" value="1"/>
</dbReference>
<dbReference type="Pfam" id="PF00884">
    <property type="entry name" value="Sulfatase"/>
    <property type="match status" value="1"/>
</dbReference>
<dbReference type="PIRSF" id="PIRSF004950">
    <property type="entry name" value="Mmb_sulf_HI0842"/>
    <property type="match status" value="1"/>
</dbReference>
<dbReference type="SUPFAM" id="SSF53649">
    <property type="entry name" value="Alkaline phosphatase-like"/>
    <property type="match status" value="1"/>
</dbReference>
<evidence type="ECO:0000250" key="1"/>
<evidence type="ECO:0000255" key="2"/>
<evidence type="ECO:0000305" key="3"/>
<proteinExistence type="inferred from homology"/>
<organism>
    <name type="scientific">Salmonella typhi</name>
    <dbReference type="NCBI Taxonomy" id="90370"/>
    <lineage>
        <taxon>Bacteria</taxon>
        <taxon>Pseudomonadati</taxon>
        <taxon>Pseudomonadota</taxon>
        <taxon>Gammaproteobacteria</taxon>
        <taxon>Enterobacterales</taxon>
        <taxon>Enterobacteriaceae</taxon>
        <taxon>Salmonella</taxon>
    </lineage>
</organism>